<proteinExistence type="evidence at protein level"/>
<feature type="chain" id="PRO_0000133131" description="Replication protein E1">
    <location>
        <begin position="1"/>
        <end position="644"/>
    </location>
</feature>
<feature type="domain" description="SF3 helicase" evidence="1">
    <location>
        <begin position="444"/>
        <end position="594"/>
    </location>
</feature>
<feature type="region of interest" description="DNA-binding region" evidence="1">
    <location>
        <begin position="179"/>
        <end position="345"/>
    </location>
</feature>
<feature type="region of interest" description="Required for E2 binding">
    <location>
        <begin position="312"/>
        <end position="644"/>
    </location>
</feature>
<feature type="short sequence motif" description="Nuclear localization signal" evidence="1">
    <location>
        <begin position="86"/>
        <end position="88"/>
    </location>
</feature>
<feature type="binding site" evidence="1">
    <location>
        <begin position="470"/>
        <end position="477"/>
    </location>
    <ligand>
        <name>ATP</name>
        <dbReference type="ChEBI" id="CHEBI:30616"/>
    </ligand>
</feature>
<feature type="cross-link" description="Glycyl lysine isopeptide (Lys-Gly) (interchain with G-Cter in SUMO)" evidence="1">
    <location>
        <position position="551"/>
    </location>
</feature>
<reference key="1">
    <citation type="journal article" date="1986" name="J. Virol.">
        <title>Genome organization and nucleotide sequence of human papillomavirus type 33, which is associated with cervical cancer.</title>
        <authorList>
            <person name="Cole S.T."/>
            <person name="Streeck R.E."/>
        </authorList>
    </citation>
    <scope>NUCLEOTIDE SEQUENCE [GENOMIC DNA]</scope>
</reference>
<reference key="2">
    <citation type="journal article" date="1996" name="Virology">
        <title>Domains of the E1 protein of human papillomavirus type 33 involved in binding to the E2 protein.</title>
        <authorList>
            <person name="Mueller F."/>
            <person name="Sapp M."/>
        </authorList>
    </citation>
    <scope>DOMAIN E2 PROTEIN BINDING</scope>
</reference>
<name>VE1_HPV33</name>
<gene>
    <name evidence="1" type="primary">E1</name>
</gene>
<organism>
    <name type="scientific">Human papillomavirus 33</name>
    <dbReference type="NCBI Taxonomy" id="10586"/>
    <lineage>
        <taxon>Viruses</taxon>
        <taxon>Monodnaviria</taxon>
        <taxon>Shotokuvirae</taxon>
        <taxon>Cossaviricota</taxon>
        <taxon>Papovaviricetes</taxon>
        <taxon>Zurhausenvirales</taxon>
        <taxon>Papillomaviridae</taxon>
        <taxon>Firstpapillomavirinae</taxon>
        <taxon>Alphapapillomavirus</taxon>
        <taxon>Alphapapillomavirus 9</taxon>
    </lineage>
</organism>
<accession>P06421</accession>
<comment type="function">
    <text evidence="1">ATP-dependent DNA 3'-5' helicase required for initiation of viral DNA replication. It forms a complex with the viral E2 protein. The E1-E2 complex binds to the replication origin which contains binding sites for both proteins. During the initial step, a dimer of E1 interacts with a dimer of protein E2 leading to a complex that binds the viral origin of replication with high specificity. Then, a second dimer of E1 displaces the E2 dimer in an ATP-dependent manner to form the E1 tetramer. Following this, two E1 monomers are added to each half of the site, which results in the formation of two E1 trimers on the viral ori. Subsequently, two hexamers will be created. The double hexamer acts as a bi-directional helicase machinery and unwinds the viral DNA and then recruits the host DNA polymerase to start replication.</text>
</comment>
<comment type="catalytic activity">
    <reaction evidence="1">
        <text>Couples ATP hydrolysis with the unwinding of duplex DNA by translocating in the 3'-5' direction.</text>
        <dbReference type="EC" id="5.6.2.4"/>
    </reaction>
</comment>
<comment type="catalytic activity">
    <reaction evidence="1">
        <text>ATP + H2O = ADP + phosphate + H(+)</text>
        <dbReference type="Rhea" id="RHEA:13065"/>
        <dbReference type="ChEBI" id="CHEBI:15377"/>
        <dbReference type="ChEBI" id="CHEBI:15378"/>
        <dbReference type="ChEBI" id="CHEBI:30616"/>
        <dbReference type="ChEBI" id="CHEBI:43474"/>
        <dbReference type="ChEBI" id="CHEBI:456216"/>
        <dbReference type="EC" id="5.6.2.4"/>
    </reaction>
</comment>
<comment type="subunit">
    <text evidence="1">Can form hexamers. Interacts with E2 protein; this interaction increases E1 DNA binding specificity. Interacts with host DNA polymerase subunit POLA2. Interacts with host single stranded DNA-binding protein RPA1. Interacts with host TOP1; this interaction stimulates the enzymatic activity of TOP1.</text>
</comment>
<comment type="subcellular location">
    <subcellularLocation>
        <location evidence="1">Host nucleus</location>
    </subcellularLocation>
</comment>
<comment type="PTM">
    <text evidence="1">Phosphorylated.</text>
</comment>
<comment type="PTM">
    <text evidence="1">Sumoylated.</text>
</comment>
<comment type="similarity">
    <text evidence="1">Belongs to the papillomaviridae E1 protein family.</text>
</comment>
<organismHost>
    <name type="scientific">Homo sapiens</name>
    <name type="common">Human</name>
    <dbReference type="NCBI Taxonomy" id="9606"/>
</organismHost>
<keyword id="KW-0067">ATP-binding</keyword>
<keyword id="KW-0235">DNA replication</keyword>
<keyword id="KW-0238">DNA-binding</keyword>
<keyword id="KW-0244">Early protein</keyword>
<keyword id="KW-0347">Helicase</keyword>
<keyword id="KW-1048">Host nucleus</keyword>
<keyword id="KW-0378">Hydrolase</keyword>
<keyword id="KW-0413">Isomerase</keyword>
<keyword id="KW-1017">Isopeptide bond</keyword>
<keyword id="KW-0547">Nucleotide-binding</keyword>
<keyword id="KW-0597">Phosphoprotein</keyword>
<keyword id="KW-0832">Ubl conjugation</keyword>
<evidence type="ECO:0000255" key="1">
    <source>
        <dbReference type="HAMAP-Rule" id="MF_04000"/>
    </source>
</evidence>
<dbReference type="EC" id="5.6.2.4" evidence="1"/>
<dbReference type="EMBL" id="M12732">
    <property type="protein sequence ID" value="AAA46960.1"/>
    <property type="molecule type" value="Genomic_DNA"/>
</dbReference>
<dbReference type="PIR" id="A03660">
    <property type="entry name" value="W1WL33"/>
</dbReference>
<dbReference type="SMR" id="P06421"/>
<dbReference type="Proteomes" id="UP000009118">
    <property type="component" value="Genome"/>
</dbReference>
<dbReference type="GO" id="GO:0042025">
    <property type="term" value="C:host cell nucleus"/>
    <property type="evidence" value="ECO:0007669"/>
    <property type="project" value="UniProtKB-SubCell"/>
</dbReference>
<dbReference type="GO" id="GO:0005524">
    <property type="term" value="F:ATP binding"/>
    <property type="evidence" value="ECO:0007669"/>
    <property type="project" value="UniProtKB-UniRule"/>
</dbReference>
<dbReference type="GO" id="GO:0016887">
    <property type="term" value="F:ATP hydrolysis activity"/>
    <property type="evidence" value="ECO:0007669"/>
    <property type="project" value="RHEA"/>
</dbReference>
<dbReference type="GO" id="GO:0003677">
    <property type="term" value="F:DNA binding"/>
    <property type="evidence" value="ECO:0007669"/>
    <property type="project" value="UniProtKB-UniRule"/>
</dbReference>
<dbReference type="GO" id="GO:0003678">
    <property type="term" value="F:DNA helicase activity"/>
    <property type="evidence" value="ECO:0007669"/>
    <property type="project" value="UniProtKB-UniRule"/>
</dbReference>
<dbReference type="GO" id="GO:0006260">
    <property type="term" value="P:DNA replication"/>
    <property type="evidence" value="ECO:0007669"/>
    <property type="project" value="UniProtKB-UniRule"/>
</dbReference>
<dbReference type="Gene3D" id="3.40.1310.10">
    <property type="match status" value="1"/>
</dbReference>
<dbReference type="Gene3D" id="3.40.50.300">
    <property type="entry name" value="P-loop containing nucleotide triphosphate hydrolases"/>
    <property type="match status" value="1"/>
</dbReference>
<dbReference type="Gene3D" id="1.10.10.510">
    <property type="entry name" value="Zinc finger, large T-antigen D1 domain"/>
    <property type="match status" value="1"/>
</dbReference>
<dbReference type="HAMAP" id="MF_04000">
    <property type="entry name" value="PPV_E1"/>
    <property type="match status" value="1"/>
</dbReference>
<dbReference type="InterPro" id="IPR014015">
    <property type="entry name" value="Helicase_SF3_DNA-vir"/>
</dbReference>
<dbReference type="InterPro" id="IPR027417">
    <property type="entry name" value="P-loop_NTPase"/>
</dbReference>
<dbReference type="InterPro" id="IPR001177">
    <property type="entry name" value="PPV_DNA_helicase_E1_C"/>
</dbReference>
<dbReference type="InterPro" id="IPR014000">
    <property type="entry name" value="PPV_DNA_helicase_E1_N"/>
</dbReference>
<dbReference type="InterPro" id="IPR046832">
    <property type="entry name" value="PPV_E1_DBD"/>
</dbReference>
<dbReference type="InterPro" id="IPR046935">
    <property type="entry name" value="PPV_E1_DBD_sf"/>
</dbReference>
<dbReference type="InterPro" id="IPR016393">
    <property type="entry name" value="Rep_E1_papillomaV"/>
</dbReference>
<dbReference type="InterPro" id="IPR037102">
    <property type="entry name" value="Znf_lg_T-Ag_D1_dom_sf"/>
</dbReference>
<dbReference type="Pfam" id="PF00519">
    <property type="entry name" value="PPV_E1_C"/>
    <property type="match status" value="1"/>
</dbReference>
<dbReference type="Pfam" id="PF20450">
    <property type="entry name" value="PPV_E1_DBD"/>
    <property type="match status" value="1"/>
</dbReference>
<dbReference type="Pfam" id="PF00524">
    <property type="entry name" value="PPV_E1_N"/>
    <property type="match status" value="1"/>
</dbReference>
<dbReference type="PIRSF" id="PIRSF003383">
    <property type="entry name" value="Rep_E1_papillomaV"/>
    <property type="match status" value="1"/>
</dbReference>
<dbReference type="SUPFAM" id="SSF55464">
    <property type="entry name" value="Origin of replication-binding domain, RBD-like"/>
    <property type="match status" value="1"/>
</dbReference>
<dbReference type="SUPFAM" id="SSF52540">
    <property type="entry name" value="P-loop containing nucleoside triphosphate hydrolases"/>
    <property type="match status" value="1"/>
</dbReference>
<dbReference type="PROSITE" id="PS51206">
    <property type="entry name" value="SF3_HELICASE_1"/>
    <property type="match status" value="1"/>
</dbReference>
<protein>
    <recommendedName>
        <fullName evidence="1">Replication protein E1</fullName>
        <ecNumber evidence="1">5.6.2.4</ecNumber>
    </recommendedName>
    <alternativeName>
        <fullName evidence="1">ATP-dependent helicase E1</fullName>
    </alternativeName>
    <alternativeName>
        <fullName evidence="1">DNA 3'-5' helicase E1</fullName>
    </alternativeName>
</protein>
<sequence length="644" mass="72469">MADPEGTNGAGMGCTGWFEVEAVIERRTGDNISEDEDETADDSGTDLLEFIDDSMENSIQADTEAARALFNIQEGEDDLNAVCALKRKFAACSQSAAEDVVDRAANPCRTSINKNKECTYRKRKIDELEDSGYGNTEVETQQMVQQVESQNGDTNLNDLESSGVGDDSEVSCETNVDSCENVTLQEISNVLHSSNTKANILYKFKEAYGISFMELVRPFKSDKTSCTDWCITGYGISPSVAESLKVLIKQHSLYTHLQCLTCDRGIIILLLIRFRCSKNRLTVAKLMSNLLSIPETCMVIEPPKLRSQTCALYWFRTAMSNISDVQGTTPEWIDRLTVLQHSFNDNIFDLSEMVQWAYDNELTDDSDIAYYYAQLADSNSNAAAFLKSNSQAKIVKDCGIMCRHYKKAEKRKMSIGQWIQSRCEKTNDGGNWRPIVQLLRYQNIEFTAFLGAFKKFLKGIPKKSCMLICGPANTGKSYFGMSLIQFLKGCVISCVNSKSHFWLQPLSDAKIGMIDDVTPISWTYIDDYMRNALDGNEISIDVKHRALVQLKCPPLLLTSNTNAGTDSRWPYLHSRLTVFEFKNPFPFDENGNPVYAINDENWKSFFSRTWCKLDLIEEEDKENHGGNISTFKCSAGENTRSLRS</sequence>